<sequence>MTSVHTLPDITATPAWDALRKHHDRIGDTHLRQFFEEDPDRGRELTVTVGDLYIDYSKHRVTRETLRLLVDLARTAKLEERRDQMFAGVHINTSEDRAVLHTALRLPRDAELIVDGRNVVADVHEVLDAMGEFTDRLRSGEWTGATGKRISTVVNIGIGGSDLGPVMVYQALRHYADAGISARFVSNVDPADLIATLADLDPATTLFIVASKTFSTLETLTNATAARRWITDALGDAAVAHHFVAVSTNKRLVDDFGINTDNMFGFWDWVGGRYSVDSAIGLSVMAVIGREAFADFLSGFHIVDRHFQTAPLESNAPVLLGLIGLWYSNFMGAQSRAVLPYSNDLARFAAYLQQLTMESNGKSTRADGSPVTTDTGEIFWGEPGTNGQHAFYQLLHQGTRLVPADFIGFSQPIDDLPTAEGSGSMHDLLMSNFFAQTQVLAFGKTAEEIAAEGTPADIVPHKVMPGNRPSTSILANRLTPSVLGQLIALYEHQVFTEGVIWGIDSFDQWGVELGKTQAKALLPVITADNSPAPQSDSSTDALVRRYRSERGRTS</sequence>
<gene>
    <name evidence="1" type="primary">pgi</name>
    <name type="ordered locus">MAV_1068</name>
</gene>
<organism>
    <name type="scientific">Mycobacterium avium (strain 104)</name>
    <dbReference type="NCBI Taxonomy" id="243243"/>
    <lineage>
        <taxon>Bacteria</taxon>
        <taxon>Bacillati</taxon>
        <taxon>Actinomycetota</taxon>
        <taxon>Actinomycetes</taxon>
        <taxon>Mycobacteriales</taxon>
        <taxon>Mycobacteriaceae</taxon>
        <taxon>Mycobacterium</taxon>
        <taxon>Mycobacterium avium complex (MAC)</taxon>
    </lineage>
</organism>
<comment type="function">
    <text evidence="1">Catalyzes the reversible isomerization of glucose-6-phosphate to fructose-6-phosphate.</text>
</comment>
<comment type="catalytic activity">
    <reaction evidence="1">
        <text>alpha-D-glucose 6-phosphate = beta-D-fructose 6-phosphate</text>
        <dbReference type="Rhea" id="RHEA:11816"/>
        <dbReference type="ChEBI" id="CHEBI:57634"/>
        <dbReference type="ChEBI" id="CHEBI:58225"/>
        <dbReference type="EC" id="5.3.1.9"/>
    </reaction>
</comment>
<comment type="pathway">
    <text evidence="1">Carbohydrate biosynthesis; gluconeogenesis.</text>
</comment>
<comment type="pathway">
    <text evidence="1">Carbohydrate degradation; glycolysis; D-glyceraldehyde 3-phosphate and glycerone phosphate from D-glucose: step 2/4.</text>
</comment>
<comment type="subcellular location">
    <subcellularLocation>
        <location evidence="1">Cytoplasm</location>
    </subcellularLocation>
</comment>
<comment type="similarity">
    <text evidence="1">Belongs to the GPI family.</text>
</comment>
<accession>A0QBN4</accession>
<reference key="1">
    <citation type="submission" date="2006-10" db="EMBL/GenBank/DDBJ databases">
        <authorList>
            <person name="Fleischmann R.D."/>
            <person name="Dodson R.J."/>
            <person name="Haft D.H."/>
            <person name="Merkel J.S."/>
            <person name="Nelson W.C."/>
            <person name="Fraser C.M."/>
        </authorList>
    </citation>
    <scope>NUCLEOTIDE SEQUENCE [LARGE SCALE GENOMIC DNA]</scope>
    <source>
        <strain>104</strain>
    </source>
</reference>
<dbReference type="EC" id="5.3.1.9" evidence="1"/>
<dbReference type="EMBL" id="CP000479">
    <property type="protein sequence ID" value="ABK66481.1"/>
    <property type="molecule type" value="Genomic_DNA"/>
</dbReference>
<dbReference type="RefSeq" id="WP_011723919.1">
    <property type="nucleotide sequence ID" value="NC_008595.1"/>
</dbReference>
<dbReference type="SMR" id="A0QBN4"/>
<dbReference type="KEGG" id="mav:MAV_1068"/>
<dbReference type="HOGENOM" id="CLU_017947_3_1_11"/>
<dbReference type="UniPathway" id="UPA00109">
    <property type="reaction ID" value="UER00181"/>
</dbReference>
<dbReference type="UniPathway" id="UPA00138"/>
<dbReference type="Proteomes" id="UP000001574">
    <property type="component" value="Chromosome"/>
</dbReference>
<dbReference type="GO" id="GO:0005829">
    <property type="term" value="C:cytosol"/>
    <property type="evidence" value="ECO:0007669"/>
    <property type="project" value="TreeGrafter"/>
</dbReference>
<dbReference type="GO" id="GO:0097367">
    <property type="term" value="F:carbohydrate derivative binding"/>
    <property type="evidence" value="ECO:0007669"/>
    <property type="project" value="InterPro"/>
</dbReference>
<dbReference type="GO" id="GO:0004347">
    <property type="term" value="F:glucose-6-phosphate isomerase activity"/>
    <property type="evidence" value="ECO:0007669"/>
    <property type="project" value="UniProtKB-UniRule"/>
</dbReference>
<dbReference type="GO" id="GO:0048029">
    <property type="term" value="F:monosaccharide binding"/>
    <property type="evidence" value="ECO:0007669"/>
    <property type="project" value="TreeGrafter"/>
</dbReference>
<dbReference type="GO" id="GO:0006094">
    <property type="term" value="P:gluconeogenesis"/>
    <property type="evidence" value="ECO:0007669"/>
    <property type="project" value="UniProtKB-UniRule"/>
</dbReference>
<dbReference type="GO" id="GO:0051156">
    <property type="term" value="P:glucose 6-phosphate metabolic process"/>
    <property type="evidence" value="ECO:0007669"/>
    <property type="project" value="TreeGrafter"/>
</dbReference>
<dbReference type="GO" id="GO:0006096">
    <property type="term" value="P:glycolytic process"/>
    <property type="evidence" value="ECO:0007669"/>
    <property type="project" value="UniProtKB-UniRule"/>
</dbReference>
<dbReference type="CDD" id="cd05015">
    <property type="entry name" value="SIS_PGI_1"/>
    <property type="match status" value="1"/>
</dbReference>
<dbReference type="CDD" id="cd05016">
    <property type="entry name" value="SIS_PGI_2"/>
    <property type="match status" value="1"/>
</dbReference>
<dbReference type="FunFam" id="3.40.50.10490:FF:000018">
    <property type="entry name" value="Glucose-6-phosphate isomerase"/>
    <property type="match status" value="1"/>
</dbReference>
<dbReference type="Gene3D" id="1.10.1390.10">
    <property type="match status" value="1"/>
</dbReference>
<dbReference type="Gene3D" id="3.40.50.10490">
    <property type="entry name" value="Glucose-6-phosphate isomerase like protein, domain 1"/>
    <property type="match status" value="2"/>
</dbReference>
<dbReference type="HAMAP" id="MF_00473">
    <property type="entry name" value="G6P_isomerase"/>
    <property type="match status" value="1"/>
</dbReference>
<dbReference type="InterPro" id="IPR001672">
    <property type="entry name" value="G6P_Isomerase"/>
</dbReference>
<dbReference type="InterPro" id="IPR023096">
    <property type="entry name" value="G6P_Isomerase_C"/>
</dbReference>
<dbReference type="InterPro" id="IPR018189">
    <property type="entry name" value="Phosphoglucose_isomerase_CS"/>
</dbReference>
<dbReference type="InterPro" id="IPR046348">
    <property type="entry name" value="SIS_dom_sf"/>
</dbReference>
<dbReference type="InterPro" id="IPR035476">
    <property type="entry name" value="SIS_PGI_1"/>
</dbReference>
<dbReference type="InterPro" id="IPR035482">
    <property type="entry name" value="SIS_PGI_2"/>
</dbReference>
<dbReference type="NCBIfam" id="NF001211">
    <property type="entry name" value="PRK00179.1"/>
    <property type="match status" value="1"/>
</dbReference>
<dbReference type="PANTHER" id="PTHR11469">
    <property type="entry name" value="GLUCOSE-6-PHOSPHATE ISOMERASE"/>
    <property type="match status" value="1"/>
</dbReference>
<dbReference type="PANTHER" id="PTHR11469:SF1">
    <property type="entry name" value="GLUCOSE-6-PHOSPHATE ISOMERASE"/>
    <property type="match status" value="1"/>
</dbReference>
<dbReference type="Pfam" id="PF00342">
    <property type="entry name" value="PGI"/>
    <property type="match status" value="1"/>
</dbReference>
<dbReference type="PRINTS" id="PR00662">
    <property type="entry name" value="G6PISOMERASE"/>
</dbReference>
<dbReference type="SUPFAM" id="SSF53697">
    <property type="entry name" value="SIS domain"/>
    <property type="match status" value="1"/>
</dbReference>
<dbReference type="PROSITE" id="PS00765">
    <property type="entry name" value="P_GLUCOSE_ISOMERASE_1"/>
    <property type="match status" value="1"/>
</dbReference>
<dbReference type="PROSITE" id="PS00174">
    <property type="entry name" value="P_GLUCOSE_ISOMERASE_2"/>
    <property type="match status" value="1"/>
</dbReference>
<dbReference type="PROSITE" id="PS51463">
    <property type="entry name" value="P_GLUCOSE_ISOMERASE_3"/>
    <property type="match status" value="1"/>
</dbReference>
<keyword id="KW-0963">Cytoplasm</keyword>
<keyword id="KW-0312">Gluconeogenesis</keyword>
<keyword id="KW-0324">Glycolysis</keyword>
<keyword id="KW-0413">Isomerase</keyword>
<name>G6PI_MYCA1</name>
<proteinExistence type="inferred from homology"/>
<feature type="chain" id="PRO_1000013987" description="Glucose-6-phosphate isomerase">
    <location>
        <begin position="1"/>
        <end position="554"/>
    </location>
</feature>
<feature type="region of interest" description="Disordered" evidence="2">
    <location>
        <begin position="527"/>
        <end position="554"/>
    </location>
</feature>
<feature type="compositionally biased region" description="Polar residues" evidence="2">
    <location>
        <begin position="527"/>
        <end position="540"/>
    </location>
</feature>
<feature type="compositionally biased region" description="Basic and acidic residues" evidence="2">
    <location>
        <begin position="542"/>
        <end position="554"/>
    </location>
</feature>
<feature type="active site" description="Proton donor" evidence="1">
    <location>
        <position position="358"/>
    </location>
</feature>
<feature type="active site" evidence="1">
    <location>
        <position position="389"/>
    </location>
</feature>
<feature type="active site" evidence="1">
    <location>
        <position position="515"/>
    </location>
</feature>
<evidence type="ECO:0000255" key="1">
    <source>
        <dbReference type="HAMAP-Rule" id="MF_00473"/>
    </source>
</evidence>
<evidence type="ECO:0000256" key="2">
    <source>
        <dbReference type="SAM" id="MobiDB-lite"/>
    </source>
</evidence>
<protein>
    <recommendedName>
        <fullName evidence="1">Glucose-6-phosphate isomerase</fullName>
        <shortName evidence="1">GPI</shortName>
        <ecNumber evidence="1">5.3.1.9</ecNumber>
    </recommendedName>
    <alternativeName>
        <fullName evidence="1">Phosphoglucose isomerase</fullName>
        <shortName evidence="1">PGI</shortName>
    </alternativeName>
    <alternativeName>
        <fullName evidence="1">Phosphohexose isomerase</fullName>
        <shortName evidence="1">PHI</shortName>
    </alternativeName>
</protein>